<keyword id="KW-0060">Ascorbate biosynthesis</keyword>
<keyword id="KW-0256">Endoplasmic reticulum</keyword>
<keyword id="KW-0274">FAD</keyword>
<keyword id="KW-0285">Flavoprotein</keyword>
<keyword id="KW-0472">Membrane</keyword>
<keyword id="KW-0492">Microsome</keyword>
<keyword id="KW-0560">Oxidoreductase</keyword>
<keyword id="KW-1185">Reference proteome</keyword>
<keyword id="KW-0812">Transmembrane</keyword>
<keyword id="KW-1133">Transmembrane helix</keyword>
<gene>
    <name type="primary">GULO</name>
</gene>
<name>GGLO_BOVIN</name>
<reference key="1">
    <citation type="submission" date="2005-08" db="EMBL/GenBank/DDBJ databases">
        <authorList>
            <consortium name="NIH - Mammalian Gene Collection (MGC) project"/>
        </authorList>
    </citation>
    <scope>NUCLEOTIDE SEQUENCE [LARGE SCALE MRNA]</scope>
    <source>
        <strain>Hereford</strain>
        <tissue>Rumen reticulum</tissue>
    </source>
</reference>
<proteinExistence type="evidence at transcript level"/>
<comment type="function">
    <text evidence="1">Oxidizes L-gulono-1,4-lactone to hydrogen peroxide and L-xylo-hexulonolactone which spontaneously isomerizes to L-ascorbate.</text>
</comment>
<comment type="catalytic activity">
    <reaction>
        <text>L-gulono-1,4-lactone + O2 = L-ascorbate + H2O2 + H(+)</text>
        <dbReference type="Rhea" id="RHEA:32363"/>
        <dbReference type="ChEBI" id="CHEBI:15378"/>
        <dbReference type="ChEBI" id="CHEBI:15379"/>
        <dbReference type="ChEBI" id="CHEBI:16240"/>
        <dbReference type="ChEBI" id="CHEBI:17587"/>
        <dbReference type="ChEBI" id="CHEBI:38290"/>
        <dbReference type="EC" id="1.1.3.8"/>
    </reaction>
</comment>
<comment type="cofactor">
    <cofactor evidence="1">
        <name>FAD</name>
        <dbReference type="ChEBI" id="CHEBI:57692"/>
    </cofactor>
</comment>
<comment type="pathway">
    <text>Cofactor biosynthesis; L-ascorbate biosynthesis via UDP-alpha-D-glucuronate pathway; L-ascorbate from UDP-alpha-D-glucuronate: step 4/4.</text>
</comment>
<comment type="subcellular location">
    <subcellularLocation>
        <location evidence="1">Microsome membrane</location>
        <topology evidence="1">Single-pass membrane protein</topology>
    </subcellularLocation>
    <subcellularLocation>
        <location evidence="1">Endoplasmic reticulum membrane</location>
        <topology evidence="1">Single-pass membrane protein</topology>
    </subcellularLocation>
</comment>
<comment type="similarity">
    <text evidence="4">Belongs to the oxygen-dependent FAD-linked oxidoreductase family.</text>
</comment>
<accession>Q3ZC33</accession>
<sequence>MVHGYKGVKFQNWARTYGCCPEMYFQPTSVEEVREVLALARQQNKRVKVVGGGHSPSDIACTDGFMIHMGKMNRVLKVDTEKKQVTVEAGILLADLHPQLDKHGLALSNLGAVSDVTAGGVIGSGTHNTGIKHGILATQVVALTLLTANGTILECSESSNAEVFQAARVHLGCLGVILTVTLQCVPQFHLQETTFPSTLKEVLDNLDSHLKKSEYFRFLWFPHSENVSVIYQDHTNKPPSSSANWFWDYAIGFYLLEFLLWISTFLPGLVGWINRFFFWLLFNGKKENCNLSHKIFTYECRFKQHVQDWAIPREKTKEALLELKAMLEANPKVVAHYPVEVRFTRGDDILLSPCFQRDSCYMNIIMYRPYGKDVPRLDYWLAYETIMKKVGGRPHWAKAHNCTRKDFEKMYPAFQRFCAIREKLDPTGMFLNAYLEKVFY</sequence>
<organism>
    <name type="scientific">Bos taurus</name>
    <name type="common">Bovine</name>
    <dbReference type="NCBI Taxonomy" id="9913"/>
    <lineage>
        <taxon>Eukaryota</taxon>
        <taxon>Metazoa</taxon>
        <taxon>Chordata</taxon>
        <taxon>Craniata</taxon>
        <taxon>Vertebrata</taxon>
        <taxon>Euteleostomi</taxon>
        <taxon>Mammalia</taxon>
        <taxon>Eutheria</taxon>
        <taxon>Laurasiatheria</taxon>
        <taxon>Artiodactyla</taxon>
        <taxon>Ruminantia</taxon>
        <taxon>Pecora</taxon>
        <taxon>Bovidae</taxon>
        <taxon>Bovinae</taxon>
        <taxon>Bos</taxon>
    </lineage>
</organism>
<dbReference type="EC" id="1.1.3.8"/>
<dbReference type="EMBL" id="BC102936">
    <property type="protein sequence ID" value="AAI02937.1"/>
    <property type="molecule type" value="mRNA"/>
</dbReference>
<dbReference type="RefSeq" id="NP_001029215.1">
    <property type="nucleotide sequence ID" value="NM_001034043.2"/>
</dbReference>
<dbReference type="SMR" id="Q3ZC33"/>
<dbReference type="FunCoup" id="Q3ZC33">
    <property type="interactions" value="684"/>
</dbReference>
<dbReference type="STRING" id="9913.ENSBTAP00000037993"/>
<dbReference type="PaxDb" id="9913-ENSBTAP00000037993"/>
<dbReference type="GeneID" id="286812"/>
<dbReference type="KEGG" id="bta:286812"/>
<dbReference type="CTD" id="268756"/>
<dbReference type="VEuPathDB" id="HostDB:ENSBTAG00000026748"/>
<dbReference type="eggNOG" id="KOG4730">
    <property type="taxonomic scope" value="Eukaryota"/>
</dbReference>
<dbReference type="HOGENOM" id="CLU_003896_4_1_1"/>
<dbReference type="InParanoid" id="Q3ZC33"/>
<dbReference type="OMA" id="YPRFGEF"/>
<dbReference type="OrthoDB" id="610608at2759"/>
<dbReference type="TreeFam" id="TF328994"/>
<dbReference type="UniPathway" id="UPA00991">
    <property type="reaction ID" value="UER00939"/>
</dbReference>
<dbReference type="Proteomes" id="UP000009136">
    <property type="component" value="Chromosome 8"/>
</dbReference>
<dbReference type="Bgee" id="ENSBTAG00000026748">
    <property type="expression patterns" value="Expressed in liver and 94 other cell types or tissues"/>
</dbReference>
<dbReference type="GO" id="GO:0005789">
    <property type="term" value="C:endoplasmic reticulum membrane"/>
    <property type="evidence" value="ECO:0007669"/>
    <property type="project" value="UniProtKB-SubCell"/>
</dbReference>
<dbReference type="GO" id="GO:0003885">
    <property type="term" value="F:D-arabinono-1,4-lactone oxidase activity"/>
    <property type="evidence" value="ECO:0007669"/>
    <property type="project" value="InterPro"/>
</dbReference>
<dbReference type="GO" id="GO:0071949">
    <property type="term" value="F:FAD binding"/>
    <property type="evidence" value="ECO:0007669"/>
    <property type="project" value="InterPro"/>
</dbReference>
<dbReference type="GO" id="GO:0050660">
    <property type="term" value="F:flavin adenine dinucleotide binding"/>
    <property type="evidence" value="ECO:0000250"/>
    <property type="project" value="UniProtKB"/>
</dbReference>
<dbReference type="GO" id="GO:0050105">
    <property type="term" value="F:L-gulonolactone oxidase activity"/>
    <property type="evidence" value="ECO:0000250"/>
    <property type="project" value="UniProtKB"/>
</dbReference>
<dbReference type="GO" id="GO:0016491">
    <property type="term" value="F:oxidoreductase activity"/>
    <property type="evidence" value="ECO:0000318"/>
    <property type="project" value="GO_Central"/>
</dbReference>
<dbReference type="GO" id="GO:0019853">
    <property type="term" value="P:L-ascorbic acid biosynthetic process"/>
    <property type="evidence" value="ECO:0000250"/>
    <property type="project" value="UniProtKB"/>
</dbReference>
<dbReference type="FunFam" id="1.10.45.10:FF:000004">
    <property type="entry name" value="L-gulonolactone oxidase"/>
    <property type="match status" value="1"/>
</dbReference>
<dbReference type="FunFam" id="3.30.43.10:FF:000014">
    <property type="entry name" value="L-gulonolactone oxidase"/>
    <property type="match status" value="1"/>
</dbReference>
<dbReference type="FunFam" id="3.30.465.10:FF:000035">
    <property type="entry name" value="L-gulonolactone oxidase"/>
    <property type="match status" value="1"/>
</dbReference>
<dbReference type="FunFam" id="3.30.70.2520:FF:000001">
    <property type="entry name" value="L-gulonolactone oxidase"/>
    <property type="match status" value="1"/>
</dbReference>
<dbReference type="Gene3D" id="3.30.465.10">
    <property type="match status" value="1"/>
</dbReference>
<dbReference type="Gene3D" id="3.30.70.2520">
    <property type="match status" value="1"/>
</dbReference>
<dbReference type="Gene3D" id="3.30.43.10">
    <property type="entry name" value="Uridine Diphospho-n-acetylenolpyruvylglucosamine Reductase, domain 2"/>
    <property type="match status" value="1"/>
</dbReference>
<dbReference type="Gene3D" id="1.10.45.10">
    <property type="entry name" value="Vanillyl-alcohol Oxidase, Chain A, domain 4"/>
    <property type="match status" value="1"/>
</dbReference>
<dbReference type="InterPro" id="IPR007173">
    <property type="entry name" value="ALO_C"/>
</dbReference>
<dbReference type="InterPro" id="IPR016166">
    <property type="entry name" value="FAD-bd_PCMH"/>
</dbReference>
<dbReference type="InterPro" id="IPR036318">
    <property type="entry name" value="FAD-bd_PCMH-like_sf"/>
</dbReference>
<dbReference type="InterPro" id="IPR016167">
    <property type="entry name" value="FAD-bd_PCMH_sub1"/>
</dbReference>
<dbReference type="InterPro" id="IPR016169">
    <property type="entry name" value="FAD-bd_PCMH_sub2"/>
</dbReference>
<dbReference type="InterPro" id="IPR010031">
    <property type="entry name" value="FAD_lactone_oxidase-like"/>
</dbReference>
<dbReference type="InterPro" id="IPR006094">
    <property type="entry name" value="Oxid_FAD_bind_N"/>
</dbReference>
<dbReference type="InterPro" id="IPR006093">
    <property type="entry name" value="Oxy_OxRdtase_FAD_BS"/>
</dbReference>
<dbReference type="InterPro" id="IPR030654">
    <property type="entry name" value="Sugar_lactone_oxidase"/>
</dbReference>
<dbReference type="InterPro" id="IPR016171">
    <property type="entry name" value="Vanillyl_alc_oxidase_C-sub2"/>
</dbReference>
<dbReference type="NCBIfam" id="TIGR01679">
    <property type="entry name" value="bact_FAD_ox"/>
    <property type="match status" value="1"/>
</dbReference>
<dbReference type="NCBIfam" id="TIGR01678">
    <property type="entry name" value="FAD_lactone_ox"/>
    <property type="match status" value="1"/>
</dbReference>
<dbReference type="PANTHER" id="PTHR43762">
    <property type="entry name" value="L-GULONOLACTONE OXIDASE"/>
    <property type="match status" value="1"/>
</dbReference>
<dbReference type="PANTHER" id="PTHR43762:SF8">
    <property type="entry name" value="L-GULONOLACTONE OXIDASE"/>
    <property type="match status" value="1"/>
</dbReference>
<dbReference type="Pfam" id="PF04030">
    <property type="entry name" value="ALO"/>
    <property type="match status" value="1"/>
</dbReference>
<dbReference type="Pfam" id="PF01565">
    <property type="entry name" value="FAD_binding_4"/>
    <property type="match status" value="1"/>
</dbReference>
<dbReference type="PIRSF" id="PIRSF000136">
    <property type="entry name" value="LGO_GLO"/>
    <property type="match status" value="1"/>
</dbReference>
<dbReference type="SUPFAM" id="SSF56176">
    <property type="entry name" value="FAD-binding/transporter-associated domain-like"/>
    <property type="match status" value="1"/>
</dbReference>
<dbReference type="PROSITE" id="PS51387">
    <property type="entry name" value="FAD_PCMH"/>
    <property type="match status" value="1"/>
</dbReference>
<dbReference type="PROSITE" id="PS00862">
    <property type="entry name" value="OX2_COVAL_FAD"/>
    <property type="match status" value="1"/>
</dbReference>
<feature type="chain" id="PRO_0000231673" description="L-gulonolactone oxidase">
    <location>
        <begin position="1"/>
        <end position="440"/>
    </location>
</feature>
<feature type="transmembrane region" description="Helical" evidence="2">
    <location>
        <begin position="253"/>
        <end position="273"/>
    </location>
</feature>
<feature type="domain" description="FAD-binding PCMH-type" evidence="3">
    <location>
        <begin position="17"/>
        <end position="187"/>
    </location>
</feature>
<feature type="modified residue" description="Pros-8alpha-FAD histidine" evidence="1">
    <location>
        <position position="54"/>
    </location>
</feature>
<evidence type="ECO:0000250" key="1"/>
<evidence type="ECO:0000255" key="2"/>
<evidence type="ECO:0000255" key="3">
    <source>
        <dbReference type="PROSITE-ProRule" id="PRU00718"/>
    </source>
</evidence>
<evidence type="ECO:0000305" key="4"/>
<protein>
    <recommendedName>
        <fullName>L-gulonolactone oxidase</fullName>
        <shortName>LGO</shortName>
        <ecNumber>1.1.3.8</ecNumber>
    </recommendedName>
    <alternativeName>
        <fullName>L-gulono-gamma-lactone oxidase</fullName>
        <shortName>GLO</shortName>
    </alternativeName>
</protein>